<evidence type="ECO:0000255" key="1">
    <source>
        <dbReference type="HAMAP-Rule" id="MF_00017"/>
    </source>
</evidence>
<accession>B0K101</accession>
<name>RECR_THEPX</name>
<dbReference type="EMBL" id="CP000923">
    <property type="protein sequence ID" value="ABY91358.1"/>
    <property type="molecule type" value="Genomic_DNA"/>
</dbReference>
<dbReference type="RefSeq" id="WP_003867375.1">
    <property type="nucleotide sequence ID" value="NC_010320.1"/>
</dbReference>
<dbReference type="SMR" id="B0K101"/>
<dbReference type="KEGG" id="tex:Teth514_0035"/>
<dbReference type="HOGENOM" id="CLU_060739_1_0_9"/>
<dbReference type="Proteomes" id="UP000002155">
    <property type="component" value="Chromosome"/>
</dbReference>
<dbReference type="GO" id="GO:0003677">
    <property type="term" value="F:DNA binding"/>
    <property type="evidence" value="ECO:0007669"/>
    <property type="project" value="UniProtKB-UniRule"/>
</dbReference>
<dbReference type="GO" id="GO:0008270">
    <property type="term" value="F:zinc ion binding"/>
    <property type="evidence" value="ECO:0007669"/>
    <property type="project" value="UniProtKB-KW"/>
</dbReference>
<dbReference type="GO" id="GO:0006310">
    <property type="term" value="P:DNA recombination"/>
    <property type="evidence" value="ECO:0007669"/>
    <property type="project" value="UniProtKB-UniRule"/>
</dbReference>
<dbReference type="GO" id="GO:0006281">
    <property type="term" value="P:DNA repair"/>
    <property type="evidence" value="ECO:0007669"/>
    <property type="project" value="UniProtKB-UniRule"/>
</dbReference>
<dbReference type="CDD" id="cd01025">
    <property type="entry name" value="TOPRIM_recR"/>
    <property type="match status" value="1"/>
</dbReference>
<dbReference type="Gene3D" id="3.30.60.80">
    <property type="match status" value="1"/>
</dbReference>
<dbReference type="Gene3D" id="3.40.1360.10">
    <property type="match status" value="1"/>
</dbReference>
<dbReference type="Gene3D" id="6.10.250.240">
    <property type="match status" value="1"/>
</dbReference>
<dbReference type="Gene3D" id="1.10.8.420">
    <property type="entry name" value="RecR Domain 1"/>
    <property type="match status" value="1"/>
</dbReference>
<dbReference type="HAMAP" id="MF_00017">
    <property type="entry name" value="RecR"/>
    <property type="match status" value="1"/>
</dbReference>
<dbReference type="InterPro" id="IPR000093">
    <property type="entry name" value="DNA_Rcmb_RecR"/>
</dbReference>
<dbReference type="InterPro" id="IPR003583">
    <property type="entry name" value="Hlx-hairpin-Hlx_DNA-bd_motif"/>
</dbReference>
<dbReference type="InterPro" id="IPR023627">
    <property type="entry name" value="Rcmb_RecR"/>
</dbReference>
<dbReference type="InterPro" id="IPR015967">
    <property type="entry name" value="Rcmb_RecR_Znf"/>
</dbReference>
<dbReference type="InterPro" id="IPR006171">
    <property type="entry name" value="TOPRIM_dom"/>
</dbReference>
<dbReference type="InterPro" id="IPR034137">
    <property type="entry name" value="TOPRIM_RecR"/>
</dbReference>
<dbReference type="NCBIfam" id="TIGR00615">
    <property type="entry name" value="recR"/>
    <property type="match status" value="1"/>
</dbReference>
<dbReference type="PANTHER" id="PTHR30446">
    <property type="entry name" value="RECOMBINATION PROTEIN RECR"/>
    <property type="match status" value="1"/>
</dbReference>
<dbReference type="PANTHER" id="PTHR30446:SF0">
    <property type="entry name" value="RECOMBINATION PROTEIN RECR"/>
    <property type="match status" value="1"/>
</dbReference>
<dbReference type="Pfam" id="PF21175">
    <property type="entry name" value="RecR_C"/>
    <property type="match status" value="1"/>
</dbReference>
<dbReference type="Pfam" id="PF21176">
    <property type="entry name" value="RecR_HhH"/>
    <property type="match status" value="1"/>
</dbReference>
<dbReference type="Pfam" id="PF02132">
    <property type="entry name" value="RecR_ZnF"/>
    <property type="match status" value="1"/>
</dbReference>
<dbReference type="Pfam" id="PF13662">
    <property type="entry name" value="Toprim_4"/>
    <property type="match status" value="1"/>
</dbReference>
<dbReference type="SMART" id="SM00278">
    <property type="entry name" value="HhH1"/>
    <property type="match status" value="1"/>
</dbReference>
<dbReference type="SMART" id="SM00493">
    <property type="entry name" value="TOPRIM"/>
    <property type="match status" value="1"/>
</dbReference>
<dbReference type="SUPFAM" id="SSF111304">
    <property type="entry name" value="Recombination protein RecR"/>
    <property type="match status" value="1"/>
</dbReference>
<dbReference type="PROSITE" id="PS01300">
    <property type="entry name" value="RECR"/>
    <property type="match status" value="1"/>
</dbReference>
<dbReference type="PROSITE" id="PS50880">
    <property type="entry name" value="TOPRIM"/>
    <property type="match status" value="1"/>
</dbReference>
<reference key="1">
    <citation type="submission" date="2008-01" db="EMBL/GenBank/DDBJ databases">
        <title>Complete sequence of Thermoanaerobacter sp. X514.</title>
        <authorList>
            <consortium name="US DOE Joint Genome Institute"/>
            <person name="Copeland A."/>
            <person name="Lucas S."/>
            <person name="Lapidus A."/>
            <person name="Barry K."/>
            <person name="Glavina del Rio T."/>
            <person name="Dalin E."/>
            <person name="Tice H."/>
            <person name="Pitluck S."/>
            <person name="Bruce D."/>
            <person name="Goodwin L."/>
            <person name="Saunders E."/>
            <person name="Brettin T."/>
            <person name="Detter J.C."/>
            <person name="Han C."/>
            <person name="Schmutz J."/>
            <person name="Larimer F."/>
            <person name="Land M."/>
            <person name="Hauser L."/>
            <person name="Kyrpides N."/>
            <person name="Kim E."/>
            <person name="Hemme C."/>
            <person name="Fields M.W."/>
            <person name="He Z."/>
            <person name="Zhou J."/>
            <person name="Richardson P."/>
        </authorList>
    </citation>
    <scope>NUCLEOTIDE SEQUENCE [LARGE SCALE GENOMIC DNA]</scope>
    <source>
        <strain>X514</strain>
    </source>
</reference>
<comment type="function">
    <text evidence="1">May play a role in DNA repair. It seems to be involved in an RecBC-independent recombinational process of DNA repair. It may act with RecF and RecO.</text>
</comment>
<comment type="similarity">
    <text evidence="1">Belongs to the RecR family.</text>
</comment>
<gene>
    <name evidence="1" type="primary">recR</name>
    <name type="ordered locus">Teth514_0035</name>
</gene>
<proteinExistence type="inferred from homology"/>
<keyword id="KW-0227">DNA damage</keyword>
<keyword id="KW-0233">DNA recombination</keyword>
<keyword id="KW-0234">DNA repair</keyword>
<keyword id="KW-0479">Metal-binding</keyword>
<keyword id="KW-0862">Zinc</keyword>
<keyword id="KW-0863">Zinc-finger</keyword>
<organism>
    <name type="scientific">Thermoanaerobacter sp. (strain X514)</name>
    <dbReference type="NCBI Taxonomy" id="399726"/>
    <lineage>
        <taxon>Bacteria</taxon>
        <taxon>Bacillati</taxon>
        <taxon>Bacillota</taxon>
        <taxon>Clostridia</taxon>
        <taxon>Thermoanaerobacterales</taxon>
        <taxon>Thermoanaerobacteraceae</taxon>
        <taxon>Thermoanaerobacter</taxon>
    </lineage>
</organism>
<protein>
    <recommendedName>
        <fullName evidence="1">Recombination protein RecR</fullName>
    </recommendedName>
</protein>
<sequence length="199" mass="22136">MNYYSTSIAKLIEELSKLPGVGPKTAQRLAFFIINMPLEEVKSLSQAIIDAKEKIKYCRICYNITDTEVCNICSDKERDHSLICVVSHPMDVVAMEKIREYKGVYHVLHGVISPIEGVGPEDIKIKELLDRVKNGNVKEVILATNPDIEGEATAMYIAKLLKPLGIKVTRIAHGVPVGGDLEYTDVVTLSRALEGRREL</sequence>
<feature type="chain" id="PRO_1000089778" description="Recombination protein RecR">
    <location>
        <begin position="1"/>
        <end position="199"/>
    </location>
</feature>
<feature type="domain" description="Toprim" evidence="1">
    <location>
        <begin position="81"/>
        <end position="176"/>
    </location>
</feature>
<feature type="zinc finger region" description="C4-type" evidence="1">
    <location>
        <begin position="58"/>
        <end position="73"/>
    </location>
</feature>